<organism>
    <name type="scientific">Salmonella typhi</name>
    <dbReference type="NCBI Taxonomy" id="90370"/>
    <lineage>
        <taxon>Bacteria</taxon>
        <taxon>Pseudomonadati</taxon>
        <taxon>Pseudomonadota</taxon>
        <taxon>Gammaproteobacteria</taxon>
        <taxon>Enterobacterales</taxon>
        <taxon>Enterobacteriaceae</taxon>
        <taxon>Salmonella</taxon>
    </lineage>
</organism>
<evidence type="ECO:0000255" key="1">
    <source>
        <dbReference type="HAMAP-Rule" id="MF_00235"/>
    </source>
</evidence>
<feature type="chain" id="PRO_0000158841" description="Adenylate kinase">
    <location>
        <begin position="1"/>
        <end position="214"/>
    </location>
</feature>
<feature type="region of interest" description="NMP" evidence="1">
    <location>
        <begin position="30"/>
        <end position="59"/>
    </location>
</feature>
<feature type="region of interest" description="LID">
    <location>
        <begin position="122"/>
        <end position="159"/>
    </location>
</feature>
<feature type="binding site" evidence="1">
    <location>
        <begin position="10"/>
        <end position="15"/>
    </location>
    <ligand>
        <name>ATP</name>
        <dbReference type="ChEBI" id="CHEBI:30616"/>
    </ligand>
</feature>
<feature type="binding site" evidence="1">
    <location>
        <position position="31"/>
    </location>
    <ligand>
        <name>AMP</name>
        <dbReference type="ChEBI" id="CHEBI:456215"/>
    </ligand>
</feature>
<feature type="binding site" evidence="1">
    <location>
        <position position="36"/>
    </location>
    <ligand>
        <name>AMP</name>
        <dbReference type="ChEBI" id="CHEBI:456215"/>
    </ligand>
</feature>
<feature type="binding site" evidence="1">
    <location>
        <begin position="57"/>
        <end position="59"/>
    </location>
    <ligand>
        <name>AMP</name>
        <dbReference type="ChEBI" id="CHEBI:456215"/>
    </ligand>
</feature>
<feature type="binding site" evidence="1">
    <location>
        <begin position="85"/>
        <end position="88"/>
    </location>
    <ligand>
        <name>AMP</name>
        <dbReference type="ChEBI" id="CHEBI:456215"/>
    </ligand>
</feature>
<feature type="binding site" evidence="1">
    <location>
        <position position="92"/>
    </location>
    <ligand>
        <name>AMP</name>
        <dbReference type="ChEBI" id="CHEBI:456215"/>
    </ligand>
</feature>
<feature type="binding site" evidence="1">
    <location>
        <position position="123"/>
    </location>
    <ligand>
        <name>ATP</name>
        <dbReference type="ChEBI" id="CHEBI:30616"/>
    </ligand>
</feature>
<feature type="binding site" evidence="1">
    <location>
        <begin position="132"/>
        <end position="133"/>
    </location>
    <ligand>
        <name>ATP</name>
        <dbReference type="ChEBI" id="CHEBI:30616"/>
    </ligand>
</feature>
<feature type="binding site" evidence="1">
    <location>
        <position position="156"/>
    </location>
    <ligand>
        <name>AMP</name>
        <dbReference type="ChEBI" id="CHEBI:456215"/>
    </ligand>
</feature>
<feature type="binding site" evidence="1">
    <location>
        <position position="167"/>
    </location>
    <ligand>
        <name>AMP</name>
        <dbReference type="ChEBI" id="CHEBI:456215"/>
    </ligand>
</feature>
<feature type="binding site" evidence="1">
    <location>
        <position position="200"/>
    </location>
    <ligand>
        <name>ATP</name>
        <dbReference type="ChEBI" id="CHEBI:30616"/>
    </ligand>
</feature>
<keyword id="KW-0067">ATP-binding</keyword>
<keyword id="KW-0963">Cytoplasm</keyword>
<keyword id="KW-0418">Kinase</keyword>
<keyword id="KW-0545">Nucleotide biosynthesis</keyword>
<keyword id="KW-0547">Nucleotide-binding</keyword>
<keyword id="KW-0808">Transferase</keyword>
<protein>
    <recommendedName>
        <fullName evidence="1">Adenylate kinase</fullName>
        <shortName evidence="1">AK</shortName>
        <ecNumber evidence="1">2.7.4.3</ecNumber>
    </recommendedName>
    <alternativeName>
        <fullName evidence="1">ATP-AMP transphosphorylase</fullName>
    </alternativeName>
    <alternativeName>
        <fullName evidence="1">ATP:AMP phosphotransferase</fullName>
    </alternativeName>
    <alternativeName>
        <fullName evidence="1">Adenylate monophosphate kinase</fullName>
    </alternativeName>
</protein>
<proteinExistence type="inferred from homology"/>
<accession>P0A1V5</accession>
<accession>P37407</accession>
<reference key="1">
    <citation type="journal article" date="2001" name="Nature">
        <title>Complete genome sequence of a multiple drug resistant Salmonella enterica serovar Typhi CT18.</title>
        <authorList>
            <person name="Parkhill J."/>
            <person name="Dougan G."/>
            <person name="James K.D."/>
            <person name="Thomson N.R."/>
            <person name="Pickard D."/>
            <person name="Wain J."/>
            <person name="Churcher C.M."/>
            <person name="Mungall K.L."/>
            <person name="Bentley S.D."/>
            <person name="Holden M.T.G."/>
            <person name="Sebaihia M."/>
            <person name="Baker S."/>
            <person name="Basham D."/>
            <person name="Brooks K."/>
            <person name="Chillingworth T."/>
            <person name="Connerton P."/>
            <person name="Cronin A."/>
            <person name="Davis P."/>
            <person name="Davies R.M."/>
            <person name="Dowd L."/>
            <person name="White N."/>
            <person name="Farrar J."/>
            <person name="Feltwell T."/>
            <person name="Hamlin N."/>
            <person name="Haque A."/>
            <person name="Hien T.T."/>
            <person name="Holroyd S."/>
            <person name="Jagels K."/>
            <person name="Krogh A."/>
            <person name="Larsen T.S."/>
            <person name="Leather S."/>
            <person name="Moule S."/>
            <person name="O'Gaora P."/>
            <person name="Parry C."/>
            <person name="Quail M.A."/>
            <person name="Rutherford K.M."/>
            <person name="Simmonds M."/>
            <person name="Skelton J."/>
            <person name="Stevens K."/>
            <person name="Whitehead S."/>
            <person name="Barrell B.G."/>
        </authorList>
    </citation>
    <scope>NUCLEOTIDE SEQUENCE [LARGE SCALE GENOMIC DNA]</scope>
    <source>
        <strain>CT18</strain>
    </source>
</reference>
<reference key="2">
    <citation type="journal article" date="2003" name="J. Bacteriol.">
        <title>Comparative genomics of Salmonella enterica serovar Typhi strains Ty2 and CT18.</title>
        <authorList>
            <person name="Deng W."/>
            <person name="Liou S.-R."/>
            <person name="Plunkett G. III"/>
            <person name="Mayhew G.F."/>
            <person name="Rose D.J."/>
            <person name="Burland V."/>
            <person name="Kodoyianni V."/>
            <person name="Schwartz D.C."/>
            <person name="Blattner F.R."/>
        </authorList>
    </citation>
    <scope>NUCLEOTIDE SEQUENCE [LARGE SCALE GENOMIC DNA]</scope>
    <source>
        <strain>ATCC 700931 / Ty2</strain>
    </source>
</reference>
<gene>
    <name evidence="1" type="primary">adk</name>
    <name type="ordered locus">STY0532</name>
    <name type="ordered locus">t2372</name>
</gene>
<dbReference type="EC" id="2.7.4.3" evidence="1"/>
<dbReference type="EMBL" id="AL513382">
    <property type="protein sequence ID" value="CAD04973.1"/>
    <property type="molecule type" value="Genomic_DNA"/>
</dbReference>
<dbReference type="EMBL" id="AE014613">
    <property type="protein sequence ID" value="AAO69963.1"/>
    <property type="molecule type" value="Genomic_DNA"/>
</dbReference>
<dbReference type="RefSeq" id="NP_455084.1">
    <property type="nucleotide sequence ID" value="NC_003198.1"/>
</dbReference>
<dbReference type="RefSeq" id="WP_001220237.1">
    <property type="nucleotide sequence ID" value="NZ_WSUR01000008.1"/>
</dbReference>
<dbReference type="SMR" id="P0A1V5"/>
<dbReference type="STRING" id="220341.gene:17584553"/>
<dbReference type="KEGG" id="stt:t2372"/>
<dbReference type="KEGG" id="sty:STY0532"/>
<dbReference type="PATRIC" id="fig|220341.7.peg.534"/>
<dbReference type="eggNOG" id="COG0563">
    <property type="taxonomic scope" value="Bacteria"/>
</dbReference>
<dbReference type="HOGENOM" id="CLU_032354_1_2_6"/>
<dbReference type="OMA" id="VYHEQTA"/>
<dbReference type="OrthoDB" id="9805030at2"/>
<dbReference type="UniPathway" id="UPA00588">
    <property type="reaction ID" value="UER00649"/>
</dbReference>
<dbReference type="Proteomes" id="UP000000541">
    <property type="component" value="Chromosome"/>
</dbReference>
<dbReference type="Proteomes" id="UP000002670">
    <property type="component" value="Chromosome"/>
</dbReference>
<dbReference type="GO" id="GO:0005737">
    <property type="term" value="C:cytoplasm"/>
    <property type="evidence" value="ECO:0007669"/>
    <property type="project" value="UniProtKB-SubCell"/>
</dbReference>
<dbReference type="GO" id="GO:0004017">
    <property type="term" value="F:adenylate kinase activity"/>
    <property type="evidence" value="ECO:0007669"/>
    <property type="project" value="UniProtKB-UniRule"/>
</dbReference>
<dbReference type="GO" id="GO:0005524">
    <property type="term" value="F:ATP binding"/>
    <property type="evidence" value="ECO:0007669"/>
    <property type="project" value="UniProtKB-UniRule"/>
</dbReference>
<dbReference type="GO" id="GO:0044209">
    <property type="term" value="P:AMP salvage"/>
    <property type="evidence" value="ECO:0007669"/>
    <property type="project" value="UniProtKB-UniRule"/>
</dbReference>
<dbReference type="CDD" id="cd01428">
    <property type="entry name" value="ADK"/>
    <property type="match status" value="1"/>
</dbReference>
<dbReference type="FunFam" id="3.40.50.300:FF:000106">
    <property type="entry name" value="Adenylate kinase mitochondrial"/>
    <property type="match status" value="1"/>
</dbReference>
<dbReference type="Gene3D" id="3.40.50.300">
    <property type="entry name" value="P-loop containing nucleotide triphosphate hydrolases"/>
    <property type="match status" value="1"/>
</dbReference>
<dbReference type="HAMAP" id="MF_00235">
    <property type="entry name" value="Adenylate_kinase_Adk"/>
    <property type="match status" value="1"/>
</dbReference>
<dbReference type="InterPro" id="IPR006259">
    <property type="entry name" value="Adenyl_kin_sub"/>
</dbReference>
<dbReference type="InterPro" id="IPR000850">
    <property type="entry name" value="Adenylat/UMP-CMP_kin"/>
</dbReference>
<dbReference type="InterPro" id="IPR033690">
    <property type="entry name" value="Adenylat_kinase_CS"/>
</dbReference>
<dbReference type="InterPro" id="IPR007862">
    <property type="entry name" value="Adenylate_kinase_lid-dom"/>
</dbReference>
<dbReference type="InterPro" id="IPR027417">
    <property type="entry name" value="P-loop_NTPase"/>
</dbReference>
<dbReference type="NCBIfam" id="TIGR01351">
    <property type="entry name" value="adk"/>
    <property type="match status" value="1"/>
</dbReference>
<dbReference type="NCBIfam" id="NF001379">
    <property type="entry name" value="PRK00279.1-1"/>
    <property type="match status" value="1"/>
</dbReference>
<dbReference type="NCBIfam" id="NF001380">
    <property type="entry name" value="PRK00279.1-2"/>
    <property type="match status" value="1"/>
</dbReference>
<dbReference type="NCBIfam" id="NF001381">
    <property type="entry name" value="PRK00279.1-3"/>
    <property type="match status" value="1"/>
</dbReference>
<dbReference type="NCBIfam" id="NF011100">
    <property type="entry name" value="PRK14527.1"/>
    <property type="match status" value="1"/>
</dbReference>
<dbReference type="PANTHER" id="PTHR23359">
    <property type="entry name" value="NUCLEOTIDE KINASE"/>
    <property type="match status" value="1"/>
</dbReference>
<dbReference type="Pfam" id="PF00406">
    <property type="entry name" value="ADK"/>
    <property type="match status" value="1"/>
</dbReference>
<dbReference type="Pfam" id="PF05191">
    <property type="entry name" value="ADK_lid"/>
    <property type="match status" value="1"/>
</dbReference>
<dbReference type="PRINTS" id="PR00094">
    <property type="entry name" value="ADENYLTKNASE"/>
</dbReference>
<dbReference type="SUPFAM" id="SSF52540">
    <property type="entry name" value="P-loop containing nucleoside triphosphate hydrolases"/>
    <property type="match status" value="1"/>
</dbReference>
<dbReference type="PROSITE" id="PS00113">
    <property type="entry name" value="ADENYLATE_KINASE"/>
    <property type="match status" value="1"/>
</dbReference>
<name>KAD_SALTI</name>
<comment type="function">
    <text evidence="1">Catalyzes the reversible transfer of the terminal phosphate group between ATP and AMP. Plays an important role in cellular energy homeostasis and in adenine nucleotide metabolism.</text>
</comment>
<comment type="catalytic activity">
    <reaction evidence="1">
        <text>AMP + ATP = 2 ADP</text>
        <dbReference type="Rhea" id="RHEA:12973"/>
        <dbReference type="ChEBI" id="CHEBI:30616"/>
        <dbReference type="ChEBI" id="CHEBI:456215"/>
        <dbReference type="ChEBI" id="CHEBI:456216"/>
        <dbReference type="EC" id="2.7.4.3"/>
    </reaction>
</comment>
<comment type="pathway">
    <text evidence="1">Purine metabolism; AMP biosynthesis via salvage pathway; AMP from ADP: step 1/1.</text>
</comment>
<comment type="subunit">
    <text evidence="1">Monomer.</text>
</comment>
<comment type="subcellular location">
    <subcellularLocation>
        <location evidence="1">Cytoplasm</location>
    </subcellularLocation>
</comment>
<comment type="domain">
    <text evidence="1">Consists of three domains, a large central CORE domain and two small peripheral domains, NMPbind and LID, which undergo movements during catalysis. The LID domain closes over the site of phosphoryl transfer upon ATP binding. Assembling and dissambling the active center during each catalytic cycle provides an effective means to prevent ATP hydrolysis.</text>
</comment>
<comment type="similarity">
    <text evidence="1">Belongs to the adenylate kinase family.</text>
</comment>
<sequence>MRIILLGAPGAGKGTQAQFIMEKYGIPQISTGDMLRAAVKSGSELGKQAKDIMDAGKLVTDELVIALVKERIAQEDCRNGFLLDGFPRTIPQADAMKEAGIVVDYVLEFDVPDELIVDRIVGRRVHAASGRVYHVKFNPPKVEGKDDVTGEDLTTRKDDQEETVRKRLVEYHQMTAPLIGYYQKEAEAGNTKYAKVDGTQAVADVRAALEKILG</sequence>